<dbReference type="EC" id="2.4.2.9" evidence="1"/>
<dbReference type="EMBL" id="AE002098">
    <property type="protein sequence ID" value="AAF41187.1"/>
    <property type="molecule type" value="Genomic_DNA"/>
</dbReference>
<dbReference type="PIR" id="C81160">
    <property type="entry name" value="C81160"/>
</dbReference>
<dbReference type="RefSeq" id="NP_273816.1">
    <property type="nucleotide sequence ID" value="NC_003112.2"/>
</dbReference>
<dbReference type="RefSeq" id="WP_002225428.1">
    <property type="nucleotide sequence ID" value="NC_003112.2"/>
</dbReference>
<dbReference type="SMR" id="Q9K048"/>
<dbReference type="FunCoup" id="Q9K048">
    <property type="interactions" value="480"/>
</dbReference>
<dbReference type="STRING" id="122586.NMB0774"/>
<dbReference type="PaxDb" id="122586-NMB0774"/>
<dbReference type="KEGG" id="nme:NMB0774"/>
<dbReference type="PATRIC" id="fig|122586.8.peg.980"/>
<dbReference type="HOGENOM" id="CLU_067096_2_2_4"/>
<dbReference type="InParanoid" id="Q9K048"/>
<dbReference type="OrthoDB" id="9781675at2"/>
<dbReference type="UniPathway" id="UPA00574">
    <property type="reaction ID" value="UER00636"/>
</dbReference>
<dbReference type="Proteomes" id="UP000000425">
    <property type="component" value="Chromosome"/>
</dbReference>
<dbReference type="GO" id="GO:0005737">
    <property type="term" value="C:cytoplasm"/>
    <property type="evidence" value="ECO:0000318"/>
    <property type="project" value="GO_Central"/>
</dbReference>
<dbReference type="GO" id="GO:0005829">
    <property type="term" value="C:cytosol"/>
    <property type="evidence" value="ECO:0000318"/>
    <property type="project" value="GO_Central"/>
</dbReference>
<dbReference type="GO" id="GO:0005525">
    <property type="term" value="F:GTP binding"/>
    <property type="evidence" value="ECO:0007669"/>
    <property type="project" value="UniProtKB-KW"/>
</dbReference>
<dbReference type="GO" id="GO:0000287">
    <property type="term" value="F:magnesium ion binding"/>
    <property type="evidence" value="ECO:0007669"/>
    <property type="project" value="UniProtKB-UniRule"/>
</dbReference>
<dbReference type="GO" id="GO:0004845">
    <property type="term" value="F:uracil phosphoribosyltransferase activity"/>
    <property type="evidence" value="ECO:0000318"/>
    <property type="project" value="GO_Central"/>
</dbReference>
<dbReference type="GO" id="GO:0044206">
    <property type="term" value="P:UMP salvage"/>
    <property type="evidence" value="ECO:0007669"/>
    <property type="project" value="UniProtKB-UniRule"/>
</dbReference>
<dbReference type="GO" id="GO:0006223">
    <property type="term" value="P:uracil salvage"/>
    <property type="evidence" value="ECO:0007669"/>
    <property type="project" value="InterPro"/>
</dbReference>
<dbReference type="CDD" id="cd06223">
    <property type="entry name" value="PRTases_typeI"/>
    <property type="match status" value="1"/>
</dbReference>
<dbReference type="FunFam" id="3.40.50.2020:FF:000003">
    <property type="entry name" value="Uracil phosphoribosyltransferase"/>
    <property type="match status" value="1"/>
</dbReference>
<dbReference type="Gene3D" id="3.40.50.2020">
    <property type="match status" value="1"/>
</dbReference>
<dbReference type="HAMAP" id="MF_01218_B">
    <property type="entry name" value="Upp_B"/>
    <property type="match status" value="1"/>
</dbReference>
<dbReference type="InterPro" id="IPR000836">
    <property type="entry name" value="PRibTrfase_dom"/>
</dbReference>
<dbReference type="InterPro" id="IPR029057">
    <property type="entry name" value="PRTase-like"/>
</dbReference>
<dbReference type="InterPro" id="IPR034332">
    <property type="entry name" value="Upp_B"/>
</dbReference>
<dbReference type="InterPro" id="IPR050054">
    <property type="entry name" value="UPRTase/APRTase"/>
</dbReference>
<dbReference type="InterPro" id="IPR005765">
    <property type="entry name" value="Ura_phspho_trans"/>
</dbReference>
<dbReference type="NCBIfam" id="NF001097">
    <property type="entry name" value="PRK00129.1"/>
    <property type="match status" value="1"/>
</dbReference>
<dbReference type="NCBIfam" id="TIGR01091">
    <property type="entry name" value="upp"/>
    <property type="match status" value="1"/>
</dbReference>
<dbReference type="PANTHER" id="PTHR32315">
    <property type="entry name" value="ADENINE PHOSPHORIBOSYLTRANSFERASE"/>
    <property type="match status" value="1"/>
</dbReference>
<dbReference type="PANTHER" id="PTHR32315:SF4">
    <property type="entry name" value="URACIL PHOSPHORIBOSYLTRANSFERASE, CHLOROPLASTIC"/>
    <property type="match status" value="1"/>
</dbReference>
<dbReference type="Pfam" id="PF14681">
    <property type="entry name" value="UPRTase"/>
    <property type="match status" value="1"/>
</dbReference>
<dbReference type="SUPFAM" id="SSF53271">
    <property type="entry name" value="PRTase-like"/>
    <property type="match status" value="1"/>
</dbReference>
<evidence type="ECO:0000255" key="1">
    <source>
        <dbReference type="HAMAP-Rule" id="MF_01218"/>
    </source>
</evidence>
<proteinExistence type="inferred from homology"/>
<feature type="chain" id="PRO_0000120861" description="Uracil phosphoribosyltransferase">
    <location>
        <begin position="1"/>
        <end position="208"/>
    </location>
</feature>
<feature type="binding site" evidence="1">
    <location>
        <position position="78"/>
    </location>
    <ligand>
        <name>5-phospho-alpha-D-ribose 1-diphosphate</name>
        <dbReference type="ChEBI" id="CHEBI:58017"/>
    </ligand>
</feature>
<feature type="binding site" evidence="1">
    <location>
        <position position="103"/>
    </location>
    <ligand>
        <name>5-phospho-alpha-D-ribose 1-diphosphate</name>
        <dbReference type="ChEBI" id="CHEBI:58017"/>
    </ligand>
</feature>
<feature type="binding site" evidence="1">
    <location>
        <begin position="130"/>
        <end position="138"/>
    </location>
    <ligand>
        <name>5-phospho-alpha-D-ribose 1-diphosphate</name>
        <dbReference type="ChEBI" id="CHEBI:58017"/>
    </ligand>
</feature>
<feature type="binding site" evidence="1">
    <location>
        <position position="193"/>
    </location>
    <ligand>
        <name>uracil</name>
        <dbReference type="ChEBI" id="CHEBI:17568"/>
    </ligand>
</feature>
<feature type="binding site" evidence="1">
    <location>
        <begin position="198"/>
        <end position="200"/>
    </location>
    <ligand>
        <name>uracil</name>
        <dbReference type="ChEBI" id="CHEBI:17568"/>
    </ligand>
</feature>
<feature type="binding site" evidence="1">
    <location>
        <position position="199"/>
    </location>
    <ligand>
        <name>5-phospho-alpha-D-ribose 1-diphosphate</name>
        <dbReference type="ChEBI" id="CHEBI:58017"/>
    </ligand>
</feature>
<sequence>MNVNVINHPLVRHKLTLMREADCSTYKFRTLATELARLMAYEASRDFEIEKYLIDGWCGQIEGDRIKGKTLTVVPILRAGLGMLDGVLDLIPTAKISVVGLQRDEETLKPISYFEKFVDSMDERPALIIDPMLATGGSMVATIDLLKAKGCKNIKALVLVAAPEGVKAVNDAHPDVTIYTAALDSHLNENGYIIPGLGDAGDKIFGTR</sequence>
<gene>
    <name evidence="1" type="primary">upp</name>
    <name type="ordered locus">NMB0774</name>
</gene>
<accession>Q9K048</accession>
<keyword id="KW-0021">Allosteric enzyme</keyword>
<keyword id="KW-0328">Glycosyltransferase</keyword>
<keyword id="KW-0342">GTP-binding</keyword>
<keyword id="KW-0460">Magnesium</keyword>
<keyword id="KW-0547">Nucleotide-binding</keyword>
<keyword id="KW-1185">Reference proteome</keyword>
<keyword id="KW-0808">Transferase</keyword>
<reference key="1">
    <citation type="journal article" date="2000" name="Science">
        <title>Complete genome sequence of Neisseria meningitidis serogroup B strain MC58.</title>
        <authorList>
            <person name="Tettelin H."/>
            <person name="Saunders N.J."/>
            <person name="Heidelberg J.F."/>
            <person name="Jeffries A.C."/>
            <person name="Nelson K.E."/>
            <person name="Eisen J.A."/>
            <person name="Ketchum K.A."/>
            <person name="Hood D.W."/>
            <person name="Peden J.F."/>
            <person name="Dodson R.J."/>
            <person name="Nelson W.C."/>
            <person name="Gwinn M.L."/>
            <person name="DeBoy R.T."/>
            <person name="Peterson J.D."/>
            <person name="Hickey E.K."/>
            <person name="Haft D.H."/>
            <person name="Salzberg S.L."/>
            <person name="White O."/>
            <person name="Fleischmann R.D."/>
            <person name="Dougherty B.A."/>
            <person name="Mason T.M."/>
            <person name="Ciecko A."/>
            <person name="Parksey D.S."/>
            <person name="Blair E."/>
            <person name="Cittone H."/>
            <person name="Clark E.B."/>
            <person name="Cotton M.D."/>
            <person name="Utterback T.R."/>
            <person name="Khouri H.M."/>
            <person name="Qin H."/>
            <person name="Vamathevan J.J."/>
            <person name="Gill J."/>
            <person name="Scarlato V."/>
            <person name="Masignani V."/>
            <person name="Pizza M."/>
            <person name="Grandi G."/>
            <person name="Sun L."/>
            <person name="Smith H.O."/>
            <person name="Fraser C.M."/>
            <person name="Moxon E.R."/>
            <person name="Rappuoli R."/>
            <person name="Venter J.C."/>
        </authorList>
    </citation>
    <scope>NUCLEOTIDE SEQUENCE [LARGE SCALE GENOMIC DNA]</scope>
    <source>
        <strain>ATCC BAA-335 / MC58</strain>
    </source>
</reference>
<protein>
    <recommendedName>
        <fullName evidence="1">Uracil phosphoribosyltransferase</fullName>
        <ecNumber evidence="1">2.4.2.9</ecNumber>
    </recommendedName>
    <alternativeName>
        <fullName evidence="1">UMP pyrophosphorylase</fullName>
    </alternativeName>
    <alternativeName>
        <fullName evidence="1">UPRTase</fullName>
    </alternativeName>
</protein>
<comment type="function">
    <text evidence="1">Catalyzes the conversion of uracil and 5-phospho-alpha-D-ribose 1-diphosphate (PRPP) to UMP and diphosphate.</text>
</comment>
<comment type="catalytic activity">
    <reaction evidence="1">
        <text>UMP + diphosphate = 5-phospho-alpha-D-ribose 1-diphosphate + uracil</text>
        <dbReference type="Rhea" id="RHEA:13017"/>
        <dbReference type="ChEBI" id="CHEBI:17568"/>
        <dbReference type="ChEBI" id="CHEBI:33019"/>
        <dbReference type="ChEBI" id="CHEBI:57865"/>
        <dbReference type="ChEBI" id="CHEBI:58017"/>
        <dbReference type="EC" id="2.4.2.9"/>
    </reaction>
</comment>
<comment type="cofactor">
    <cofactor evidence="1">
        <name>Mg(2+)</name>
        <dbReference type="ChEBI" id="CHEBI:18420"/>
    </cofactor>
    <text evidence="1">Binds 1 Mg(2+) ion per subunit. The magnesium is bound as Mg-PRPP.</text>
</comment>
<comment type="activity regulation">
    <text evidence="1">Allosterically activated by GTP.</text>
</comment>
<comment type="pathway">
    <text evidence="1">Pyrimidine metabolism; UMP biosynthesis via salvage pathway; UMP from uracil: step 1/1.</text>
</comment>
<comment type="similarity">
    <text evidence="1">Belongs to the UPRTase family.</text>
</comment>
<organism>
    <name type="scientific">Neisseria meningitidis serogroup B (strain ATCC BAA-335 / MC58)</name>
    <dbReference type="NCBI Taxonomy" id="122586"/>
    <lineage>
        <taxon>Bacteria</taxon>
        <taxon>Pseudomonadati</taxon>
        <taxon>Pseudomonadota</taxon>
        <taxon>Betaproteobacteria</taxon>
        <taxon>Neisseriales</taxon>
        <taxon>Neisseriaceae</taxon>
        <taxon>Neisseria</taxon>
    </lineage>
</organism>
<name>UPP_NEIMB</name>